<keyword id="KW-0066">ATP synthesis</keyword>
<keyword id="KW-1003">Cell membrane</keyword>
<keyword id="KW-0139">CF(1)</keyword>
<keyword id="KW-0375">Hydrogen ion transport</keyword>
<keyword id="KW-0406">Ion transport</keyword>
<keyword id="KW-0472">Membrane</keyword>
<keyword id="KW-0813">Transport</keyword>
<proteinExistence type="inferred from homology"/>
<accession>B9LBM3</accession>
<comment type="function">
    <text evidence="1">F(1)F(0) ATP synthase produces ATP from ADP in the presence of a proton or sodium gradient. F-type ATPases consist of two structural domains, F(1) containing the extramembraneous catalytic core and F(0) containing the membrane proton channel, linked together by a central stalk and a peripheral stalk. During catalysis, ATP synthesis in the catalytic domain of F(1) is coupled via a rotary mechanism of the central stalk subunits to proton translocation.</text>
</comment>
<comment type="function">
    <text evidence="1">This protein is part of the stalk that links CF(0) to CF(1). It either transmits conformational changes from CF(0) to CF(1) or is implicated in proton conduction.</text>
</comment>
<comment type="subunit">
    <text evidence="1">F-type ATPases have 2 components, F(1) - the catalytic core - and F(0) - the membrane proton channel. F(1) has five subunits: alpha(3), beta(3), gamma(1), delta(1), epsilon(1). F(0) has three main subunits: a(1), b(2) and c(10-14). The alpha and beta chains form an alternating ring which encloses part of the gamma chain. F(1) is attached to F(0) by a central stalk formed by the gamma and epsilon chains, while a peripheral stalk is formed by the delta and b chains.</text>
</comment>
<comment type="subcellular location">
    <subcellularLocation>
        <location evidence="1">Cell membrane</location>
        <topology evidence="1">Peripheral membrane protein</topology>
    </subcellularLocation>
</comment>
<comment type="similarity">
    <text evidence="1">Belongs to the ATPase delta chain family.</text>
</comment>
<organism>
    <name type="scientific">Chloroflexus aurantiacus (strain ATCC 29364 / DSM 637 / Y-400-fl)</name>
    <dbReference type="NCBI Taxonomy" id="480224"/>
    <lineage>
        <taxon>Bacteria</taxon>
        <taxon>Bacillati</taxon>
        <taxon>Chloroflexota</taxon>
        <taxon>Chloroflexia</taxon>
        <taxon>Chloroflexales</taxon>
        <taxon>Chloroflexineae</taxon>
        <taxon>Chloroflexaceae</taxon>
        <taxon>Chloroflexus</taxon>
    </lineage>
</organism>
<protein>
    <recommendedName>
        <fullName evidence="1">ATP synthase subunit delta</fullName>
    </recommendedName>
    <alternativeName>
        <fullName evidence="1">ATP synthase F(1) sector subunit delta</fullName>
    </alternativeName>
    <alternativeName>
        <fullName evidence="1">F-type ATPase subunit delta</fullName>
        <shortName evidence="1">F-ATPase subunit delta</shortName>
    </alternativeName>
</protein>
<sequence length="157" mass="16537">MATTIDARALAAPLVEALLTTAAEQIRAAAPRIAGLSASEAAAVLPADLLPQVRNFLLTMAKEGLTGELNAVAAALPGYLETGSRAVDASVTSAIELSAEQKERITRELQQRYGDVHVTYHVDPTLIGGLIIRVGDQVLDNSLRARLSAIQRVLQAS</sequence>
<dbReference type="EMBL" id="CP001364">
    <property type="protein sequence ID" value="ACM54668.1"/>
    <property type="molecule type" value="Genomic_DNA"/>
</dbReference>
<dbReference type="SMR" id="B9LBM3"/>
<dbReference type="KEGG" id="chl:Chy400_3290"/>
<dbReference type="HOGENOM" id="CLU_085114_3_0_0"/>
<dbReference type="OrthoDB" id="9802471at2"/>
<dbReference type="GO" id="GO:0005886">
    <property type="term" value="C:plasma membrane"/>
    <property type="evidence" value="ECO:0007669"/>
    <property type="project" value="UniProtKB-SubCell"/>
</dbReference>
<dbReference type="GO" id="GO:0045259">
    <property type="term" value="C:proton-transporting ATP synthase complex"/>
    <property type="evidence" value="ECO:0007669"/>
    <property type="project" value="UniProtKB-KW"/>
</dbReference>
<dbReference type="GO" id="GO:0046933">
    <property type="term" value="F:proton-transporting ATP synthase activity, rotational mechanism"/>
    <property type="evidence" value="ECO:0007669"/>
    <property type="project" value="UniProtKB-UniRule"/>
</dbReference>
<dbReference type="HAMAP" id="MF_01416">
    <property type="entry name" value="ATP_synth_delta_bact"/>
    <property type="match status" value="1"/>
</dbReference>
<dbReference type="InterPro" id="IPR020781">
    <property type="entry name" value="ATPase_OSCP/d_CS"/>
</dbReference>
<dbReference type="InterPro" id="IPR000711">
    <property type="entry name" value="ATPase_OSCP/dsu"/>
</dbReference>
<dbReference type="NCBIfam" id="TIGR01145">
    <property type="entry name" value="ATP_synt_delta"/>
    <property type="match status" value="1"/>
</dbReference>
<dbReference type="PANTHER" id="PTHR11910">
    <property type="entry name" value="ATP SYNTHASE DELTA CHAIN"/>
    <property type="match status" value="1"/>
</dbReference>
<dbReference type="Pfam" id="PF00213">
    <property type="entry name" value="OSCP"/>
    <property type="match status" value="1"/>
</dbReference>
<dbReference type="SUPFAM" id="SSF160527">
    <property type="entry name" value="V-type ATPase subunit E-like"/>
    <property type="match status" value="1"/>
</dbReference>
<dbReference type="PROSITE" id="PS00389">
    <property type="entry name" value="ATPASE_DELTA"/>
    <property type="match status" value="1"/>
</dbReference>
<reference key="1">
    <citation type="submission" date="2009-01" db="EMBL/GenBank/DDBJ databases">
        <title>Complete sequence of Chloroflexus sp. Y-400-fl.</title>
        <authorList>
            <consortium name="US DOE Joint Genome Institute"/>
            <person name="Lucas S."/>
            <person name="Copeland A."/>
            <person name="Lapidus A."/>
            <person name="Glavina del Rio T."/>
            <person name="Dalin E."/>
            <person name="Tice H."/>
            <person name="Bruce D."/>
            <person name="Goodwin L."/>
            <person name="Pitluck S."/>
            <person name="Sims D."/>
            <person name="Kiss H."/>
            <person name="Brettin T."/>
            <person name="Detter J.C."/>
            <person name="Han C."/>
            <person name="Larimer F."/>
            <person name="Land M."/>
            <person name="Hauser L."/>
            <person name="Kyrpides N."/>
            <person name="Ovchinnikova G."/>
            <person name="Bryant D.A."/>
            <person name="Richardson P."/>
        </authorList>
    </citation>
    <scope>NUCLEOTIDE SEQUENCE [LARGE SCALE GENOMIC DNA]</scope>
    <source>
        <strain>ATCC 29364 / DSM 637 / Y-400-fl</strain>
    </source>
</reference>
<gene>
    <name evidence="1" type="primary">atpH</name>
    <name type="ordered locus">Chy400_3290</name>
</gene>
<evidence type="ECO:0000255" key="1">
    <source>
        <dbReference type="HAMAP-Rule" id="MF_01416"/>
    </source>
</evidence>
<feature type="chain" id="PRO_0000382082" description="ATP synthase subunit delta">
    <location>
        <begin position="1"/>
        <end position="157"/>
    </location>
</feature>
<name>ATPD_CHLSY</name>